<feature type="chain" id="PRO_0000186647" description="PTS system mannose-specific EIIC component">
    <location>
        <begin position="1"/>
        <end position="266"/>
    </location>
</feature>
<feature type="topological domain" description="Periplasmic" evidence="1">
    <location>
        <begin position="1"/>
        <end position="4"/>
    </location>
</feature>
<feature type="intramembrane region" evidence="1">
    <location>
        <begin position="5"/>
        <end position="43"/>
    </location>
</feature>
<feature type="topological domain" description="Periplasmic" evidence="1">
    <location>
        <begin position="44"/>
        <end position="46"/>
    </location>
</feature>
<feature type="intramembrane region" evidence="1">
    <location>
        <begin position="47"/>
        <end position="86"/>
    </location>
</feature>
<feature type="topological domain" description="Periplasmic" evidence="1">
    <location>
        <begin position="87"/>
        <end position="90"/>
    </location>
</feature>
<feature type="transmembrane region" evidence="1">
    <location>
        <begin position="91"/>
        <end position="124"/>
    </location>
</feature>
<feature type="topological domain" description="Cytoplasmic" evidence="1">
    <location>
        <begin position="125"/>
        <end position="132"/>
    </location>
</feature>
<feature type="transmembrane region" evidence="1">
    <location>
        <begin position="133"/>
        <end position="160"/>
    </location>
</feature>
<feature type="topological domain" description="Periplasmic" evidence="1">
    <location>
        <begin position="161"/>
        <end position="176"/>
    </location>
</feature>
<feature type="transmembrane region" evidence="1">
    <location>
        <begin position="177"/>
        <end position="200"/>
    </location>
</feature>
<feature type="topological domain" description="Cytoplasmic" evidence="1">
    <location>
        <begin position="201"/>
        <end position="207"/>
    </location>
</feature>
<feature type="transmembrane region" evidence="1">
    <location>
        <begin position="208"/>
        <end position="218"/>
    </location>
</feature>
<feature type="topological domain" description="Periplasmic" evidence="1">
    <location>
        <begin position="219"/>
        <end position="224"/>
    </location>
</feature>
<feature type="transmembrane region" evidence="1">
    <location>
        <begin position="225"/>
        <end position="242"/>
    </location>
</feature>
<feature type="topological domain" description="Cytoplasmic" evidence="1">
    <location>
        <begin position="243"/>
        <end position="266"/>
    </location>
</feature>
<feature type="domain" description="PTS EIIC type-4" evidence="2">
    <location>
        <begin position="1"/>
        <end position="237"/>
    </location>
</feature>
<feature type="modified residue" description="N-formylmethionine" evidence="1">
    <location>
        <position position="1"/>
    </location>
</feature>
<protein>
    <recommendedName>
        <fullName evidence="1">PTS system mannose-specific EIIC component</fullName>
    </recommendedName>
    <alternativeName>
        <fullName evidence="1">EII-P-Man</fullName>
    </alternativeName>
    <alternativeName>
        <fullName evidence="1">EIIC-Man</fullName>
    </alternativeName>
    <alternativeName>
        <fullName evidence="1">Mannose permease IIC component</fullName>
    </alternativeName>
</protein>
<accession>P69802</accession>
<accession>P08187</accession>
<accession>Q47351</accession>
<name>PTNC_ECOL6</name>
<dbReference type="EMBL" id="AE014075">
    <property type="protein sequence ID" value="AAN80683.1"/>
    <property type="molecule type" value="Genomic_DNA"/>
</dbReference>
<dbReference type="RefSeq" id="WP_000406926.1">
    <property type="nucleotide sequence ID" value="NZ_CP051263.1"/>
</dbReference>
<dbReference type="SMR" id="P69802"/>
<dbReference type="STRING" id="199310.c2224"/>
<dbReference type="GeneID" id="93776067"/>
<dbReference type="KEGG" id="ecc:c2224"/>
<dbReference type="eggNOG" id="COG3715">
    <property type="taxonomic scope" value="Bacteria"/>
</dbReference>
<dbReference type="HOGENOM" id="CLU_069101_0_0_6"/>
<dbReference type="BioCyc" id="ECOL199310:C2224-MONOMER"/>
<dbReference type="Proteomes" id="UP000001410">
    <property type="component" value="Chromosome"/>
</dbReference>
<dbReference type="GO" id="GO:0005886">
    <property type="term" value="C:plasma membrane"/>
    <property type="evidence" value="ECO:0007669"/>
    <property type="project" value="UniProtKB-SubCell"/>
</dbReference>
<dbReference type="GO" id="GO:0009401">
    <property type="term" value="P:phosphoenolpyruvate-dependent sugar phosphotransferase system"/>
    <property type="evidence" value="ECO:0007669"/>
    <property type="project" value="UniProtKB-KW"/>
</dbReference>
<dbReference type="InterPro" id="IPR050303">
    <property type="entry name" value="GatZ_KbaZ_carbometab"/>
</dbReference>
<dbReference type="InterPro" id="IPR004700">
    <property type="entry name" value="PTS_IIC_man"/>
</dbReference>
<dbReference type="NCBIfam" id="TIGR00822">
    <property type="entry name" value="EII-Sor"/>
    <property type="match status" value="1"/>
</dbReference>
<dbReference type="NCBIfam" id="NF011647">
    <property type="entry name" value="PRK15065.1"/>
    <property type="match status" value="1"/>
</dbReference>
<dbReference type="PANTHER" id="PTHR32502">
    <property type="entry name" value="N-ACETYLGALACTOSAMINE PERMEASE II COMPONENT-RELATED"/>
    <property type="match status" value="1"/>
</dbReference>
<dbReference type="PANTHER" id="PTHR32502:SF4">
    <property type="entry name" value="PTS SYSTEM MANNOSE-SPECIFIC EIIC COMPONENT"/>
    <property type="match status" value="1"/>
</dbReference>
<dbReference type="Pfam" id="PF03609">
    <property type="entry name" value="EII-Sor"/>
    <property type="match status" value="1"/>
</dbReference>
<dbReference type="PROSITE" id="PS51106">
    <property type="entry name" value="PTS_EIIC_TYPE_4"/>
    <property type="match status" value="1"/>
</dbReference>
<gene>
    <name type="primary">manY</name>
    <name type="ordered locus">c2224</name>
</gene>
<keyword id="KW-0997">Cell inner membrane</keyword>
<keyword id="KW-1003">Cell membrane</keyword>
<keyword id="KW-0291">Formylation</keyword>
<keyword id="KW-0472">Membrane</keyword>
<keyword id="KW-0598">Phosphotransferase system</keyword>
<keyword id="KW-1185">Reference proteome</keyword>
<keyword id="KW-0762">Sugar transport</keyword>
<keyword id="KW-0812">Transmembrane</keyword>
<keyword id="KW-1133">Transmembrane helix</keyword>
<keyword id="KW-0813">Transport</keyword>
<reference key="1">
    <citation type="journal article" date="2002" name="Proc. Natl. Acad. Sci. U.S.A.">
        <title>Extensive mosaic structure revealed by the complete genome sequence of uropathogenic Escherichia coli.</title>
        <authorList>
            <person name="Welch R.A."/>
            <person name="Burland V."/>
            <person name="Plunkett G. III"/>
            <person name="Redford P."/>
            <person name="Roesch P."/>
            <person name="Rasko D."/>
            <person name="Buckles E.L."/>
            <person name="Liou S.-R."/>
            <person name="Boutin A."/>
            <person name="Hackett J."/>
            <person name="Stroud D."/>
            <person name="Mayhew G.F."/>
            <person name="Rose D.J."/>
            <person name="Zhou S."/>
            <person name="Schwartz D.C."/>
            <person name="Perna N.T."/>
            <person name="Mobley H.L.T."/>
            <person name="Donnenberg M.S."/>
            <person name="Blattner F.R."/>
        </authorList>
    </citation>
    <scope>NUCLEOTIDE SEQUENCE [LARGE SCALE GENOMIC DNA]</scope>
    <source>
        <strain>CFT073 / ATCC 700928 / UPEC</strain>
    </source>
</reference>
<comment type="function">
    <text evidence="1">The phosphoenolpyruvate-dependent sugar phosphotransferase system (sugar PTS), a major carbohydrate active transport system, catalyzes the phosphorylation of incoming sugar substrates concomitantly with their translocation across the cell membrane. The enzyme II ManXYZ PTS system is involved in mannose transport.</text>
</comment>
<comment type="subunit">
    <text evidence="1">Homotrimer of protomers that are composed of two subunits, IIC and IID.</text>
</comment>
<comment type="subcellular location">
    <subcellularLocation>
        <location evidence="2">Cell inner membrane</location>
        <topology evidence="2">Multi-pass membrane protein</topology>
    </subcellularLocation>
</comment>
<comment type="domain">
    <text evidence="2">The PTS EIIC type-4 domain forms the PTS system translocation channel and contains the specific substrate-binding site.</text>
</comment>
<organism>
    <name type="scientific">Escherichia coli O6:H1 (strain CFT073 / ATCC 700928 / UPEC)</name>
    <dbReference type="NCBI Taxonomy" id="199310"/>
    <lineage>
        <taxon>Bacteria</taxon>
        <taxon>Pseudomonadati</taxon>
        <taxon>Pseudomonadota</taxon>
        <taxon>Gammaproteobacteria</taxon>
        <taxon>Enterobacterales</taxon>
        <taxon>Enterobacteriaceae</taxon>
        <taxon>Escherichia</taxon>
    </lineage>
</organism>
<evidence type="ECO:0000250" key="1">
    <source>
        <dbReference type="UniProtKB" id="P69801"/>
    </source>
</evidence>
<evidence type="ECO:0000255" key="2">
    <source>
        <dbReference type="PROSITE-ProRule" id="PRU00429"/>
    </source>
</evidence>
<sequence length="266" mass="27636">MEITTLQIVLVFIVACIAGMGSILDEFQFHRPLIACTLVGIVLGDMKTGIIIGGTLEMIALGWMNIGAAVAPDAALASIISTILVIAGHQSIGAGIALAIPLAAAGQVLTIIVRTITVAFQHAADKAADNGNLTAISWIHVSSLFLQAMRVAIPAVIVALSVGTSEVQNMLNAIPEVVTNGLNIAGGMIVVVGYAMVINMMRAGYLMPFFYLGFVTAAFTNFNLVALGVIGTVMAVLYIQLSPKYNRVAGAPAQAAGNNDLDNELD</sequence>
<proteinExistence type="inferred from homology"/>